<feature type="chain" id="PRO_1000069648" description="Purine nucleoside phosphorylase DeoD-type">
    <location>
        <begin position="1"/>
        <end position="239"/>
    </location>
</feature>
<feature type="active site" description="Proton donor" evidence="2">
    <location>
        <position position="205"/>
    </location>
</feature>
<feature type="binding site" evidence="1">
    <location>
        <position position="5"/>
    </location>
    <ligand>
        <name>a purine D-ribonucleoside</name>
        <dbReference type="ChEBI" id="CHEBI:142355"/>
        <note>ligand shared between dimeric partners</note>
    </ligand>
</feature>
<feature type="binding site" description="in other chain" evidence="1">
    <location>
        <position position="21"/>
    </location>
    <ligand>
        <name>phosphate</name>
        <dbReference type="ChEBI" id="CHEBI:43474"/>
        <note>ligand shared between dimeric partners</note>
    </ligand>
</feature>
<feature type="binding site" description="in other chain" evidence="1">
    <location>
        <position position="25"/>
    </location>
    <ligand>
        <name>phosphate</name>
        <dbReference type="ChEBI" id="CHEBI:43474"/>
        <note>ligand shared between dimeric partners</note>
    </ligand>
</feature>
<feature type="binding site" evidence="1">
    <location>
        <position position="44"/>
    </location>
    <ligand>
        <name>phosphate</name>
        <dbReference type="ChEBI" id="CHEBI:43474"/>
        <note>ligand shared between dimeric partners</note>
    </ligand>
</feature>
<feature type="binding site" description="in other chain" evidence="1">
    <location>
        <begin position="88"/>
        <end position="91"/>
    </location>
    <ligand>
        <name>phosphate</name>
        <dbReference type="ChEBI" id="CHEBI:43474"/>
        <note>ligand shared between dimeric partners</note>
    </ligand>
</feature>
<feature type="binding site" description="in other chain" evidence="1">
    <location>
        <begin position="180"/>
        <end position="182"/>
    </location>
    <ligand>
        <name>a purine D-ribonucleoside</name>
        <dbReference type="ChEBI" id="CHEBI:142355"/>
        <note>ligand shared between dimeric partners</note>
    </ligand>
</feature>
<feature type="binding site" description="in other chain" evidence="1">
    <location>
        <begin position="204"/>
        <end position="205"/>
    </location>
    <ligand>
        <name>a purine D-ribonucleoside</name>
        <dbReference type="ChEBI" id="CHEBI:142355"/>
        <note>ligand shared between dimeric partners</note>
    </ligand>
</feature>
<feature type="site" description="Important for catalytic activity" evidence="2">
    <location>
        <position position="218"/>
    </location>
</feature>
<feature type="modified residue" description="N6-acetyllysine" evidence="2">
    <location>
        <position position="27"/>
    </location>
</feature>
<proteinExistence type="inferred from homology"/>
<sequence length="239" mass="25936">MATPHINAEMGDFADVVLMPGDPLRAKYIAETFLEDAREVNNVRGMLGFTGTYKGRKISVMGHGMGIPSCSIYTKELITDFGVKKIIRVGSCGAVLPHVKLRDVVIGMGACTDSKVNRIRFKDHDFAAIADFDMVRNAVDAAKALGVDARVGNLFSADLFYSPDGEMFDVMEKYGILGVEMEAAGIYGVAAEFGAKALTICTVSDHIRTHEQTTAAERQTTFNDMIKIALESVLLGDKE</sequence>
<accession>Q0SX27</accession>
<name>DEOD_SHIF8</name>
<comment type="function">
    <text evidence="2">Catalyzes the reversible phosphorolytic breakdown of the N-glycosidic bond in the beta-(deoxy)ribonucleoside molecules, with the formation of the corresponding free purine bases and pentose-1-phosphate.</text>
</comment>
<comment type="catalytic activity">
    <reaction evidence="2">
        <text>a purine D-ribonucleoside + phosphate = a purine nucleobase + alpha-D-ribose 1-phosphate</text>
        <dbReference type="Rhea" id="RHEA:19805"/>
        <dbReference type="ChEBI" id="CHEBI:26386"/>
        <dbReference type="ChEBI" id="CHEBI:43474"/>
        <dbReference type="ChEBI" id="CHEBI:57720"/>
        <dbReference type="ChEBI" id="CHEBI:142355"/>
        <dbReference type="EC" id="2.4.2.1"/>
    </reaction>
</comment>
<comment type="catalytic activity">
    <reaction evidence="2">
        <text>a purine 2'-deoxy-D-ribonucleoside + phosphate = a purine nucleobase + 2-deoxy-alpha-D-ribose 1-phosphate</text>
        <dbReference type="Rhea" id="RHEA:36431"/>
        <dbReference type="ChEBI" id="CHEBI:26386"/>
        <dbReference type="ChEBI" id="CHEBI:43474"/>
        <dbReference type="ChEBI" id="CHEBI:57259"/>
        <dbReference type="ChEBI" id="CHEBI:142361"/>
        <dbReference type="EC" id="2.4.2.1"/>
    </reaction>
</comment>
<comment type="subunit">
    <text evidence="2">Homohexamer; trimer of homodimers.</text>
</comment>
<comment type="similarity">
    <text evidence="2">Belongs to the PNP/UDP phosphorylase family.</text>
</comment>
<reference key="1">
    <citation type="journal article" date="2006" name="BMC Genomics">
        <title>Complete genome sequence of Shigella flexneri 5b and comparison with Shigella flexneri 2a.</title>
        <authorList>
            <person name="Nie H."/>
            <person name="Yang F."/>
            <person name="Zhang X."/>
            <person name="Yang J."/>
            <person name="Chen L."/>
            <person name="Wang J."/>
            <person name="Xiong Z."/>
            <person name="Peng J."/>
            <person name="Sun L."/>
            <person name="Dong J."/>
            <person name="Xue Y."/>
            <person name="Xu X."/>
            <person name="Chen S."/>
            <person name="Yao Z."/>
            <person name="Shen Y."/>
            <person name="Jin Q."/>
        </authorList>
    </citation>
    <scope>NUCLEOTIDE SEQUENCE [LARGE SCALE GENOMIC DNA]</scope>
    <source>
        <strain>8401</strain>
    </source>
</reference>
<gene>
    <name evidence="2" type="primary">deoD</name>
    <name type="ordered locus">SFV_4418</name>
</gene>
<dbReference type="EC" id="2.4.2.1" evidence="2"/>
<dbReference type="EMBL" id="CP000266">
    <property type="protein sequence ID" value="ABF06388.1"/>
    <property type="molecule type" value="Genomic_DNA"/>
</dbReference>
<dbReference type="RefSeq" id="WP_000224879.1">
    <property type="nucleotide sequence ID" value="NC_008258.1"/>
</dbReference>
<dbReference type="SMR" id="Q0SX27"/>
<dbReference type="KEGG" id="sfv:SFV_4418"/>
<dbReference type="HOGENOM" id="CLU_068457_2_0_6"/>
<dbReference type="Proteomes" id="UP000000659">
    <property type="component" value="Chromosome"/>
</dbReference>
<dbReference type="GO" id="GO:0005829">
    <property type="term" value="C:cytosol"/>
    <property type="evidence" value="ECO:0007669"/>
    <property type="project" value="TreeGrafter"/>
</dbReference>
<dbReference type="GO" id="GO:0004731">
    <property type="term" value="F:purine-nucleoside phosphorylase activity"/>
    <property type="evidence" value="ECO:0007669"/>
    <property type="project" value="UniProtKB-UniRule"/>
</dbReference>
<dbReference type="GO" id="GO:0006152">
    <property type="term" value="P:purine nucleoside catabolic process"/>
    <property type="evidence" value="ECO:0007669"/>
    <property type="project" value="TreeGrafter"/>
</dbReference>
<dbReference type="CDD" id="cd09006">
    <property type="entry name" value="PNP_EcPNPI-like"/>
    <property type="match status" value="1"/>
</dbReference>
<dbReference type="FunFam" id="3.40.50.1580:FF:000002">
    <property type="entry name" value="Purine nucleoside phosphorylase DeoD-type"/>
    <property type="match status" value="1"/>
</dbReference>
<dbReference type="Gene3D" id="3.40.50.1580">
    <property type="entry name" value="Nucleoside phosphorylase domain"/>
    <property type="match status" value="1"/>
</dbReference>
<dbReference type="HAMAP" id="MF_01627">
    <property type="entry name" value="Pur_nucleosid_phosp"/>
    <property type="match status" value="1"/>
</dbReference>
<dbReference type="InterPro" id="IPR004402">
    <property type="entry name" value="DeoD-type"/>
</dbReference>
<dbReference type="InterPro" id="IPR018016">
    <property type="entry name" value="Nucleoside_phosphorylase_CS"/>
</dbReference>
<dbReference type="InterPro" id="IPR000845">
    <property type="entry name" value="Nucleoside_phosphorylase_d"/>
</dbReference>
<dbReference type="InterPro" id="IPR035994">
    <property type="entry name" value="Nucleoside_phosphorylase_sf"/>
</dbReference>
<dbReference type="NCBIfam" id="TIGR00107">
    <property type="entry name" value="deoD"/>
    <property type="match status" value="1"/>
</dbReference>
<dbReference type="NCBIfam" id="NF004489">
    <property type="entry name" value="PRK05819.1"/>
    <property type="match status" value="1"/>
</dbReference>
<dbReference type="NCBIfam" id="NF009914">
    <property type="entry name" value="PRK13374.1"/>
    <property type="match status" value="1"/>
</dbReference>
<dbReference type="PANTHER" id="PTHR43691:SF2">
    <property type="entry name" value="PURINE NUCLEOSIDE PHOSPHORYLASE DEOD-TYPE"/>
    <property type="match status" value="1"/>
</dbReference>
<dbReference type="PANTHER" id="PTHR43691">
    <property type="entry name" value="URIDINE PHOSPHORYLASE"/>
    <property type="match status" value="1"/>
</dbReference>
<dbReference type="Pfam" id="PF01048">
    <property type="entry name" value="PNP_UDP_1"/>
    <property type="match status" value="1"/>
</dbReference>
<dbReference type="SUPFAM" id="SSF53167">
    <property type="entry name" value="Purine and uridine phosphorylases"/>
    <property type="match status" value="1"/>
</dbReference>
<dbReference type="PROSITE" id="PS01232">
    <property type="entry name" value="PNP_UDP_1"/>
    <property type="match status" value="1"/>
</dbReference>
<organism>
    <name type="scientific">Shigella flexneri serotype 5b (strain 8401)</name>
    <dbReference type="NCBI Taxonomy" id="373384"/>
    <lineage>
        <taxon>Bacteria</taxon>
        <taxon>Pseudomonadati</taxon>
        <taxon>Pseudomonadota</taxon>
        <taxon>Gammaproteobacteria</taxon>
        <taxon>Enterobacterales</taxon>
        <taxon>Enterobacteriaceae</taxon>
        <taxon>Shigella</taxon>
    </lineage>
</organism>
<evidence type="ECO:0000250" key="1">
    <source>
        <dbReference type="UniProtKB" id="P50389"/>
    </source>
</evidence>
<evidence type="ECO:0000255" key="2">
    <source>
        <dbReference type="HAMAP-Rule" id="MF_01627"/>
    </source>
</evidence>
<keyword id="KW-0007">Acetylation</keyword>
<keyword id="KW-0328">Glycosyltransferase</keyword>
<keyword id="KW-0808">Transferase</keyword>
<protein>
    <recommendedName>
        <fullName evidence="2">Purine nucleoside phosphorylase DeoD-type</fullName>
        <shortName evidence="2">PNP</shortName>
        <ecNumber evidence="2">2.4.2.1</ecNumber>
    </recommendedName>
</protein>